<comment type="function">
    <text evidence="4 6 7 8 9">A cytochrome P450 monooxygenase that may play a role in retinoid and phospholipid metabolism (PubMed:22591743, PubMed:26936974). Catalyzes the hydroxylation of saturated carbon hydrogen bonds. Hydroxylates all trans-retinoic acid (atRA) to 4-hydroxyretinoate and may regulate atRA clearance. Other retinoids such as all-trans retinol and all-trans retinal are potential endogenous substrates (PubMed:26936974). Catalyzes both epoxidation of double bonds and hydroxylation of carbon hydrogen bonds of the fatty acyl chain of 1-acylphospholipids/2-lysophospholipids. Can metabolize various lysophospholipids classes including lysophosphatidylcholines (LPCs), lysophosphatidylinositols (LPIs), lysophosphatidylserines (LPSs), lysophosphatidylglycerols (LPGs), lysophosphatidylethanolamines (LPEs) and lysophosphatidic acids (LPAs) (PubMed:22591743). Has low or no activity toward 2-acylphospholipids/1-lysophospholipids, diacylphospholipids and free fatty acids (PubMed:22591743, PubMed:26936974). May play a role in tumorigenesis by activating procarcinogens such as aflatoxin B1, polycyclic aromatic hydrocarbon dihydrodiols and aromatic amines (PubMed:16551781, PubMed:20805301, PubMed:24278521). Mechanistically, uses molecular oxygen inserting one oxygen atom into a substrate, and reducing the second into a water molecule, with two electrons provided by NADPH via cytochrome P450 reductase (CPR; NADPH-ferrihemoprotein reductase) (PubMed:22591743, PubMed:26936974).</text>
</comment>
<comment type="catalytic activity">
    <reaction evidence="9">
        <text>all-trans-retinoate + reduced [NADPH--hemoprotein reductase] + O2 = all-trans-4-hydroxyretinoate + oxidized [NADPH--hemoprotein reductase] + H2O + H(+)</text>
        <dbReference type="Rhea" id="RHEA:51984"/>
        <dbReference type="Rhea" id="RHEA-COMP:11964"/>
        <dbReference type="Rhea" id="RHEA-COMP:11965"/>
        <dbReference type="ChEBI" id="CHEBI:15377"/>
        <dbReference type="ChEBI" id="CHEBI:15378"/>
        <dbReference type="ChEBI" id="CHEBI:15379"/>
        <dbReference type="ChEBI" id="CHEBI:35291"/>
        <dbReference type="ChEBI" id="CHEBI:57618"/>
        <dbReference type="ChEBI" id="CHEBI:58210"/>
        <dbReference type="ChEBI" id="CHEBI:134178"/>
    </reaction>
    <physiologicalReaction direction="left-to-right" evidence="14">
        <dbReference type="Rhea" id="RHEA:51985"/>
    </physiologicalReaction>
</comment>
<comment type="catalytic activity">
    <reaction evidence="7">
        <text>1-(9Z-octadecenoyl)-sn-glycero-3-phosphocholine + reduced [NADPH--hemoprotein reductase] + O2 = 1-[8-hydroxy-(9Z)-octadecenoyl]-sn-glycero-3-phosphocholine + oxidized [NADPH--hemoprotein reductase] + H2O + H(+)</text>
        <dbReference type="Rhea" id="RHEA:50328"/>
        <dbReference type="Rhea" id="RHEA-COMP:11964"/>
        <dbReference type="Rhea" id="RHEA-COMP:11965"/>
        <dbReference type="ChEBI" id="CHEBI:15377"/>
        <dbReference type="ChEBI" id="CHEBI:15378"/>
        <dbReference type="ChEBI" id="CHEBI:15379"/>
        <dbReference type="ChEBI" id="CHEBI:28610"/>
        <dbReference type="ChEBI" id="CHEBI:57618"/>
        <dbReference type="ChEBI" id="CHEBI:58210"/>
        <dbReference type="ChEBI" id="CHEBI:132285"/>
    </reaction>
    <physiologicalReaction direction="left-to-right" evidence="13">
        <dbReference type="Rhea" id="RHEA:50329"/>
    </physiologicalReaction>
</comment>
<comment type="catalytic activity">
    <reaction evidence="7">
        <text>1-(9Z-octadecenoyl)-sn-glycero-3-phosphocholine + reduced [NADPH--hemoprotein reductase] + O2 = 1-[11-hydroxy-(9Z)-octadecenoyl]-sn-glycero-3-phosphocholine + oxidized [NADPH--hemoprotein reductase] + H2O + H(+)</text>
        <dbReference type="Rhea" id="RHEA:50332"/>
        <dbReference type="Rhea" id="RHEA-COMP:11964"/>
        <dbReference type="Rhea" id="RHEA-COMP:11965"/>
        <dbReference type="ChEBI" id="CHEBI:15377"/>
        <dbReference type="ChEBI" id="CHEBI:15378"/>
        <dbReference type="ChEBI" id="CHEBI:15379"/>
        <dbReference type="ChEBI" id="CHEBI:28610"/>
        <dbReference type="ChEBI" id="CHEBI:57618"/>
        <dbReference type="ChEBI" id="CHEBI:58210"/>
        <dbReference type="ChEBI" id="CHEBI:132286"/>
    </reaction>
    <physiologicalReaction direction="left-to-right" evidence="13">
        <dbReference type="Rhea" id="RHEA:50333"/>
    </physiologicalReaction>
</comment>
<comment type="catalytic activity">
    <reaction evidence="7">
        <text>1-(9Z-octadecenoyl)-sn-glycero-3-phosphocholine + reduced [NADPH--hemoprotein reductase] + O2 = 1-[(9S,10R)-epoxy-octadecanoyl]-sn-glycero-3-phosphocholine + oxidized [NADPH--hemoprotein reductase] + H2O + H(+)</text>
        <dbReference type="Rhea" id="RHEA:50324"/>
        <dbReference type="Rhea" id="RHEA-COMP:11964"/>
        <dbReference type="Rhea" id="RHEA-COMP:11965"/>
        <dbReference type="ChEBI" id="CHEBI:15377"/>
        <dbReference type="ChEBI" id="CHEBI:15378"/>
        <dbReference type="ChEBI" id="CHEBI:15379"/>
        <dbReference type="ChEBI" id="CHEBI:28610"/>
        <dbReference type="ChEBI" id="CHEBI:57618"/>
        <dbReference type="ChEBI" id="CHEBI:58210"/>
        <dbReference type="ChEBI" id="CHEBI:132278"/>
    </reaction>
    <physiologicalReaction direction="left-to-right" evidence="13">
        <dbReference type="Rhea" id="RHEA:50325"/>
    </physiologicalReaction>
</comment>
<comment type="catalytic activity">
    <reaction evidence="7">
        <text>1-(9Z-octadecenoyl)-sn-glycero-3-phosphocholine + reduced [NADPH--hemoprotein reductase] + O2 = 1-[(9R,10S)-epoxy-octadecanoyl]-sn-glycero-3-phosphocholine + oxidized [NADPH--hemoprotein reductase] + H2O + H(+)</text>
        <dbReference type="Rhea" id="RHEA:50320"/>
        <dbReference type="Rhea" id="RHEA-COMP:11964"/>
        <dbReference type="Rhea" id="RHEA-COMP:11965"/>
        <dbReference type="ChEBI" id="CHEBI:15377"/>
        <dbReference type="ChEBI" id="CHEBI:15378"/>
        <dbReference type="ChEBI" id="CHEBI:15379"/>
        <dbReference type="ChEBI" id="CHEBI:28610"/>
        <dbReference type="ChEBI" id="CHEBI:57618"/>
        <dbReference type="ChEBI" id="CHEBI:58210"/>
        <dbReference type="ChEBI" id="CHEBI:132280"/>
    </reaction>
    <physiologicalReaction direction="left-to-right" evidence="13">
        <dbReference type="Rhea" id="RHEA:50321"/>
    </physiologicalReaction>
</comment>
<comment type="cofactor">
    <cofactor evidence="1">
        <name>heme</name>
        <dbReference type="ChEBI" id="CHEBI:30413"/>
    </cofactor>
</comment>
<comment type="biophysicochemical properties">
    <kinetics>
        <KM evidence="9">5.6 uM for all-trans-retinoate</KM>
        <KM evidence="7">38 uM for 1-(9Z-octadecenoyl)-sn-glycero-3-phosphocholine (18:1 LPC) (hydroxylation)</KM>
        <KM evidence="7">34 uM for 1-(9Z-octadecenoyl)-sn-glycero-3-phosphocholine (18:1 LPC) (epoxidation)</KM>
        <KM evidence="7">14 uM for 16:0 LPC (hydroxylation)</KM>
        <KM evidence="7">83 uM for hexadecanoate (16:0) (hydroxylation)</KM>
        <KM evidence="7">101 uM for (9Z)-octadecenoate (18:1) (hydroxylation)</KM>
        <KM evidence="7">95 uM for (9Z)-octadecenoate (18:1) (epoxidation)</KM>
    </kinetics>
</comment>
<comment type="subcellular location">
    <subcellularLocation>
        <location evidence="6">Endoplasmic reticulum lumen</location>
    </subcellularLocation>
    <subcellularLocation>
        <location evidence="6">Cell membrane</location>
    </subcellularLocation>
    <subcellularLocation>
        <location evidence="6">Microsome membrane</location>
    </subcellularLocation>
    <text evidence="6">About 8% are expressed on the cell surface.</text>
</comment>
<comment type="tissue specificity">
    <text evidence="3">Very low levels are detected in fetal and adult tissues. Highly expressed in several tumor samples, in particular colon and adrenal tumors.</text>
</comment>
<comment type="similarity">
    <text evidence="12">Belongs to the cytochrome P450 family.</text>
</comment>
<comment type="online information" name="Atlas of Genetics and Cytogenetics in Oncology and Haematology">
    <link uri="https://atlasgeneticsoncology.org/gene/44337/CYP2W1"/>
</comment>
<accession>Q8TAV3</accession>
<name>CP2W1_HUMAN</name>
<proteinExistence type="evidence at protein level"/>
<organism>
    <name type="scientific">Homo sapiens</name>
    <name type="common">Human</name>
    <dbReference type="NCBI Taxonomy" id="9606"/>
    <lineage>
        <taxon>Eukaryota</taxon>
        <taxon>Metazoa</taxon>
        <taxon>Chordata</taxon>
        <taxon>Craniata</taxon>
        <taxon>Vertebrata</taxon>
        <taxon>Euteleostomi</taxon>
        <taxon>Mammalia</taxon>
        <taxon>Eutheria</taxon>
        <taxon>Euarchontoglires</taxon>
        <taxon>Primates</taxon>
        <taxon>Haplorrhini</taxon>
        <taxon>Catarrhini</taxon>
        <taxon>Hominidae</taxon>
        <taxon>Homo</taxon>
    </lineage>
</organism>
<protein>
    <recommendedName>
        <fullName evidence="10">Cytochrome P450 2W1</fullName>
        <ecNumber evidence="7 9">1.14.14.-</ecNumber>
    </recommendedName>
    <alternativeName>
        <fullName>CYPIIW1</fullName>
    </alternativeName>
</protein>
<reference key="1">
    <citation type="journal article" date="2004" name="Genome Res.">
        <title>The status, quality, and expansion of the NIH full-length cDNA project: the Mammalian Gene Collection (MGC).</title>
        <authorList>
            <consortium name="The MGC Project Team"/>
        </authorList>
    </citation>
    <scope>NUCLEOTIDE SEQUENCE [LARGE SCALE MRNA]</scope>
    <source>
        <tissue>Lung</tissue>
    </source>
</reference>
<reference key="2">
    <citation type="journal article" date="2003" name="Nature">
        <title>The DNA sequence of human chromosome 7.</title>
        <authorList>
            <person name="Hillier L.W."/>
            <person name="Fulton R.S."/>
            <person name="Fulton L.A."/>
            <person name="Graves T.A."/>
            <person name="Pepin K.H."/>
            <person name="Wagner-McPherson C."/>
            <person name="Layman D."/>
            <person name="Maas J."/>
            <person name="Jaeger S."/>
            <person name="Walker R."/>
            <person name="Wylie K."/>
            <person name="Sekhon M."/>
            <person name="Becker M.C."/>
            <person name="O'Laughlin M.D."/>
            <person name="Schaller M.E."/>
            <person name="Fewell G.A."/>
            <person name="Delehaunty K.D."/>
            <person name="Miner T.L."/>
            <person name="Nash W.E."/>
            <person name="Cordes M."/>
            <person name="Du H."/>
            <person name="Sun H."/>
            <person name="Edwards J."/>
            <person name="Bradshaw-Cordum H."/>
            <person name="Ali J."/>
            <person name="Andrews S."/>
            <person name="Isak A."/>
            <person name="Vanbrunt A."/>
            <person name="Nguyen C."/>
            <person name="Du F."/>
            <person name="Lamar B."/>
            <person name="Courtney L."/>
            <person name="Kalicki J."/>
            <person name="Ozersky P."/>
            <person name="Bielicki L."/>
            <person name="Scott K."/>
            <person name="Holmes A."/>
            <person name="Harkins R."/>
            <person name="Harris A."/>
            <person name="Strong C.M."/>
            <person name="Hou S."/>
            <person name="Tomlinson C."/>
            <person name="Dauphin-Kohlberg S."/>
            <person name="Kozlowicz-Reilly A."/>
            <person name="Leonard S."/>
            <person name="Rohlfing T."/>
            <person name="Rock S.M."/>
            <person name="Tin-Wollam A.-M."/>
            <person name="Abbott A."/>
            <person name="Minx P."/>
            <person name="Maupin R."/>
            <person name="Strowmatt C."/>
            <person name="Latreille P."/>
            <person name="Miller N."/>
            <person name="Johnson D."/>
            <person name="Murray J."/>
            <person name="Woessner J.P."/>
            <person name="Wendl M.C."/>
            <person name="Yang S.-P."/>
            <person name="Schultz B.R."/>
            <person name="Wallis J.W."/>
            <person name="Spieth J."/>
            <person name="Bieri T.A."/>
            <person name="Nelson J.O."/>
            <person name="Berkowicz N."/>
            <person name="Wohldmann P.E."/>
            <person name="Cook L.L."/>
            <person name="Hickenbotham M.T."/>
            <person name="Eldred J."/>
            <person name="Williams D."/>
            <person name="Bedell J.A."/>
            <person name="Mardis E.R."/>
            <person name="Clifton S.W."/>
            <person name="Chissoe S.L."/>
            <person name="Marra M.A."/>
            <person name="Raymond C."/>
            <person name="Haugen E."/>
            <person name="Gillett W."/>
            <person name="Zhou Y."/>
            <person name="James R."/>
            <person name="Phelps K."/>
            <person name="Iadanoto S."/>
            <person name="Bubb K."/>
            <person name="Simms E."/>
            <person name="Levy R."/>
            <person name="Clendenning J."/>
            <person name="Kaul R."/>
            <person name="Kent W.J."/>
            <person name="Furey T.S."/>
            <person name="Baertsch R.A."/>
            <person name="Brent M.R."/>
            <person name="Keibler E."/>
            <person name="Flicek P."/>
            <person name="Bork P."/>
            <person name="Suyama M."/>
            <person name="Bailey J.A."/>
            <person name="Portnoy M.E."/>
            <person name="Torrents D."/>
            <person name="Chinwalla A.T."/>
            <person name="Gish W.R."/>
            <person name="Eddy S.R."/>
            <person name="McPherson J.D."/>
            <person name="Olson M.V."/>
            <person name="Eichler E.E."/>
            <person name="Green E.D."/>
            <person name="Waterston R.H."/>
            <person name="Wilson R.K."/>
        </authorList>
    </citation>
    <scope>NUCLEOTIDE SEQUENCE [LARGE SCALE GENOMIC DNA]</scope>
</reference>
<reference key="3">
    <citation type="journal article" date="2006" name="Biochem. Biophys. Res. Commun.">
        <title>Tumor-specific expression of the novel cytochrome P450 enzyme, CYP2W1.</title>
        <authorList>
            <person name="Karlgren M."/>
            <person name="Gomez A."/>
            <person name="Stark K."/>
            <person name="Svard J."/>
            <person name="Rodriguez-Antona C."/>
            <person name="Oliw E."/>
            <person name="Bernal M.L."/>
            <person name="Ramon y Cajal S."/>
            <person name="Johansson I."/>
            <person name="Ingelman-Sundberg M."/>
        </authorList>
    </citation>
    <scope>TISSUE SPECIFICITY</scope>
</reference>
<reference key="4">
    <citation type="journal article" date="2006" name="Mol. Pharmacol.">
        <title>Recombinant enzymes overexpressed in bacteria show broad catalytic specificity of human cytochrome P450 2W1 and limited activity of human cytochrome P450 2S1.</title>
        <authorList>
            <person name="Wu Z.L."/>
            <person name="Sohl C.D."/>
            <person name="Shimada T."/>
            <person name="Guengerich F.P."/>
        </authorList>
    </citation>
    <scope>FUNCTION</scope>
</reference>
<reference key="5">
    <citation type="journal article" date="2010" name="Mol. Pharmacol.">
        <title>Colorectal cancer-specific cytochrome P450 2W1: intracellular localization, glycosylation, and catalytic activity.</title>
        <authorList>
            <person name="Gomez A."/>
            <person name="Nekvindova J."/>
            <person name="Travica S."/>
            <person name="Lee M.Y."/>
            <person name="Johansson I."/>
            <person name="Edler D."/>
            <person name="Mkrtchian S."/>
            <person name="Ingelman-Sundberg M."/>
        </authorList>
    </citation>
    <scope>SUBCELLULAR LOCATION</scope>
    <scope>GLYCOSYLATION AT ASN-177</scope>
    <scope>MUTAGENESIS OF ASN-177</scope>
    <scope>FUNCTION</scope>
    <scope>IDENTIFICATION OF SUBSTRATE</scope>
</reference>
<reference key="6">
    <citation type="journal article" date="2010" name="Toxicol. Res.">
        <title>Bioactivation of aromatic amines by human CYP2W1, an orphan cytochrome P450 enzyme.</title>
        <authorList>
            <person name="Eun C.Y."/>
            <person name="Han S."/>
            <person name="Lim Y.R."/>
            <person name="Park H.G."/>
            <person name="Han J.S."/>
            <person name="Cho K.S."/>
            <person name="Chun Y.J."/>
            <person name="Kim D."/>
        </authorList>
    </citation>
    <scope>FUNCTION</scope>
    <scope>IDENTIFICATION OF SUBSTRATE</scope>
</reference>
<reference key="7">
    <citation type="journal article" date="2012" name="J. Lipid Res.">
        <title>Metabolomic analysis and identification of a role for the orphan human cytochrome P450 2W1 in selective oxidation of lysophospholipids.</title>
        <authorList>
            <person name="Xiao Y."/>
            <person name="Guengerich F.P."/>
        </authorList>
    </citation>
    <scope>FUNCTION</scope>
    <scope>CATALYTIC ACTIVITY</scope>
    <scope>BIOPHYSICOCHEMICAL PROPERTIES</scope>
</reference>
<reference key="8">
    <citation type="journal article" date="2016" name="Drug Metab. Dispos.">
        <title>Catalytic Activities of Tumor-Specific Human Cytochrome P450 CYP2W1 Toward Endogenous Substrates.</title>
        <authorList>
            <person name="Zhao Y."/>
            <person name="Wan D."/>
            <person name="Yang J."/>
            <person name="Hammock B.D."/>
            <person name="Ortiz de Montellano P.R."/>
        </authorList>
    </citation>
    <scope>FUNCTION</scope>
    <scope>CATALYTIC ACTIVITY</scope>
    <scope>BIOPHYSICOCHEMICAL PROPERTIES</scope>
</reference>
<reference key="9">
    <citation type="journal article" date="2010" name="Pharmacogenomics">
        <title>CYP2W1 variant alleles in Caucasians and association of the CYP2W1 G541A (Ala181Thr) polymorphism with increased colorectal cancer risk.</title>
        <authorList>
            <person name="Gervasini G."/>
            <person name="de Murillo S.G."/>
            <person name="Ladero J.M."/>
            <person name="Agundez J.A."/>
        </authorList>
    </citation>
    <scope>VARIANTS ALA-58; THR-181; ILE-432; HIS-482 AND LEU-488</scope>
</reference>
<keyword id="KW-1003">Cell membrane</keyword>
<keyword id="KW-0256">Endoplasmic reticulum</keyword>
<keyword id="KW-0325">Glycoprotein</keyword>
<keyword id="KW-0349">Heme</keyword>
<keyword id="KW-0408">Iron</keyword>
<keyword id="KW-0443">Lipid metabolism</keyword>
<keyword id="KW-0472">Membrane</keyword>
<keyword id="KW-0479">Metal-binding</keyword>
<keyword id="KW-0492">Microsome</keyword>
<keyword id="KW-0503">Monooxygenase</keyword>
<keyword id="KW-0560">Oxidoreductase</keyword>
<keyword id="KW-1267">Proteomics identification</keyword>
<keyword id="KW-1185">Reference proteome</keyword>
<keyword id="KW-0732">Signal</keyword>
<evidence type="ECO:0000250" key="1">
    <source>
        <dbReference type="UniProtKB" id="Q6VVX0"/>
    </source>
</evidence>
<evidence type="ECO:0000255" key="2"/>
<evidence type="ECO:0000269" key="3">
    <source>
    </source>
</evidence>
<evidence type="ECO:0000269" key="4">
    <source>
    </source>
</evidence>
<evidence type="ECO:0000269" key="5">
    <source>
    </source>
</evidence>
<evidence type="ECO:0000269" key="6">
    <source>
    </source>
</evidence>
<evidence type="ECO:0000269" key="7">
    <source>
    </source>
</evidence>
<evidence type="ECO:0000269" key="8">
    <source>
    </source>
</evidence>
<evidence type="ECO:0000269" key="9">
    <source>
    </source>
</evidence>
<evidence type="ECO:0000303" key="10">
    <source>
    </source>
</evidence>
<evidence type="ECO:0000303" key="11">
    <source>
    </source>
</evidence>
<evidence type="ECO:0000305" key="12"/>
<evidence type="ECO:0000305" key="13">
    <source>
    </source>
</evidence>
<evidence type="ECO:0000305" key="14">
    <source>
    </source>
</evidence>
<evidence type="ECO:0000312" key="15">
    <source>
        <dbReference type="HGNC" id="HGNC:20243"/>
    </source>
</evidence>
<dbReference type="EC" id="1.14.14.-" evidence="7 9"/>
<dbReference type="EMBL" id="AC073957">
    <property type="status" value="NOT_ANNOTATED_CDS"/>
    <property type="molecule type" value="Genomic_DNA"/>
</dbReference>
<dbReference type="EMBL" id="BC025761">
    <property type="protein sequence ID" value="AAH25761.2"/>
    <property type="molecule type" value="mRNA"/>
</dbReference>
<dbReference type="CCDS" id="CCDS5319.2"/>
<dbReference type="RefSeq" id="NP_060251.2">
    <property type="nucleotide sequence ID" value="NM_017781.3"/>
</dbReference>
<dbReference type="SMR" id="Q8TAV3"/>
<dbReference type="BioGRID" id="120251">
    <property type="interactions" value="15"/>
</dbReference>
<dbReference type="FunCoup" id="Q8TAV3">
    <property type="interactions" value="228"/>
</dbReference>
<dbReference type="IntAct" id="Q8TAV3">
    <property type="interactions" value="13"/>
</dbReference>
<dbReference type="STRING" id="9606.ENSP00000310149"/>
<dbReference type="BindingDB" id="Q8TAV3"/>
<dbReference type="ChEMBL" id="CHEMBL2406897"/>
<dbReference type="SwissLipids" id="SLP:000001619"/>
<dbReference type="GlyCosmos" id="Q8TAV3">
    <property type="glycosylation" value="1 site, No reported glycans"/>
</dbReference>
<dbReference type="GlyGen" id="Q8TAV3">
    <property type="glycosylation" value="1 site"/>
</dbReference>
<dbReference type="iPTMnet" id="Q8TAV3"/>
<dbReference type="PhosphoSitePlus" id="Q8TAV3"/>
<dbReference type="BioMuta" id="CYP2W1"/>
<dbReference type="DMDM" id="114152790"/>
<dbReference type="jPOST" id="Q8TAV3"/>
<dbReference type="MassIVE" id="Q8TAV3"/>
<dbReference type="PaxDb" id="9606-ENSP00000310149"/>
<dbReference type="PeptideAtlas" id="Q8TAV3"/>
<dbReference type="ProteomicsDB" id="73927"/>
<dbReference type="Antibodypedia" id="1974">
    <property type="antibodies" value="213 antibodies from 29 providers"/>
</dbReference>
<dbReference type="DNASU" id="54905"/>
<dbReference type="Ensembl" id="ENST00000308919.12">
    <property type="protein sequence ID" value="ENSP00000310149.7"/>
    <property type="gene ID" value="ENSG00000073067.14"/>
</dbReference>
<dbReference type="GeneID" id="54905"/>
<dbReference type="KEGG" id="hsa:54905"/>
<dbReference type="MANE-Select" id="ENST00000308919.12">
    <property type="protein sequence ID" value="ENSP00000310149.7"/>
    <property type="RefSeq nucleotide sequence ID" value="NM_017781.3"/>
    <property type="RefSeq protein sequence ID" value="NP_060251.2"/>
</dbReference>
<dbReference type="UCSC" id="uc003sjq.1">
    <property type="organism name" value="human"/>
</dbReference>
<dbReference type="AGR" id="HGNC:20243"/>
<dbReference type="CTD" id="54905"/>
<dbReference type="DisGeNET" id="54905"/>
<dbReference type="GeneCards" id="CYP2W1"/>
<dbReference type="HGNC" id="HGNC:20243">
    <property type="gene designation" value="CYP2W1"/>
</dbReference>
<dbReference type="HPA" id="ENSG00000073067">
    <property type="expression patterns" value="Group enriched (adrenal gland, intestine, skin)"/>
</dbReference>
<dbReference type="MIM" id="615967">
    <property type="type" value="gene"/>
</dbReference>
<dbReference type="neXtProt" id="NX_Q8TAV3"/>
<dbReference type="OpenTargets" id="ENSG00000073067"/>
<dbReference type="PharmGKB" id="PA134992665"/>
<dbReference type="VEuPathDB" id="HostDB:ENSG00000073067"/>
<dbReference type="eggNOG" id="KOG0156">
    <property type="taxonomic scope" value="Eukaryota"/>
</dbReference>
<dbReference type="GeneTree" id="ENSGT00940000161956"/>
<dbReference type="HOGENOM" id="CLU_001570_22_3_1"/>
<dbReference type="InParanoid" id="Q8TAV3"/>
<dbReference type="OMA" id="WTLGTLH"/>
<dbReference type="OrthoDB" id="1844152at2759"/>
<dbReference type="PAN-GO" id="Q8TAV3">
    <property type="GO annotations" value="7 GO annotations based on evolutionary models"/>
</dbReference>
<dbReference type="PhylomeDB" id="Q8TAV3"/>
<dbReference type="TreeFam" id="TF352043"/>
<dbReference type="PathwayCommons" id="Q8TAV3"/>
<dbReference type="Reactome" id="R-HSA-211958">
    <property type="pathway name" value="Miscellaneous substrates"/>
</dbReference>
<dbReference type="Reactome" id="R-HSA-211981">
    <property type="pathway name" value="Xenobiotics"/>
</dbReference>
<dbReference type="SignaLink" id="Q8TAV3"/>
<dbReference type="BioGRID-ORCS" id="54905">
    <property type="hits" value="8 hits in 1143 CRISPR screens"/>
</dbReference>
<dbReference type="GeneWiki" id="CYP2W1"/>
<dbReference type="GenomeRNAi" id="54905"/>
<dbReference type="Pharos" id="Q8TAV3">
    <property type="development level" value="Tbio"/>
</dbReference>
<dbReference type="PRO" id="PR:Q8TAV3"/>
<dbReference type="Proteomes" id="UP000005640">
    <property type="component" value="Chromosome 7"/>
</dbReference>
<dbReference type="RNAct" id="Q8TAV3">
    <property type="molecule type" value="protein"/>
</dbReference>
<dbReference type="Bgee" id="ENSG00000073067">
    <property type="expression patterns" value="Expressed in buccal mucosa cell and 120 other cell types or tissues"/>
</dbReference>
<dbReference type="ExpressionAtlas" id="Q8TAV3">
    <property type="expression patterns" value="baseline and differential"/>
</dbReference>
<dbReference type="GO" id="GO:0009986">
    <property type="term" value="C:cell surface"/>
    <property type="evidence" value="ECO:0000314"/>
    <property type="project" value="UniProtKB"/>
</dbReference>
<dbReference type="GO" id="GO:0005737">
    <property type="term" value="C:cytoplasm"/>
    <property type="evidence" value="ECO:0000318"/>
    <property type="project" value="GO_Central"/>
</dbReference>
<dbReference type="GO" id="GO:0005788">
    <property type="term" value="C:endoplasmic reticulum lumen"/>
    <property type="evidence" value="ECO:0000314"/>
    <property type="project" value="UniProtKB"/>
</dbReference>
<dbReference type="GO" id="GO:0005789">
    <property type="term" value="C:endoplasmic reticulum membrane"/>
    <property type="evidence" value="ECO:0000304"/>
    <property type="project" value="Reactome"/>
</dbReference>
<dbReference type="GO" id="GO:0043231">
    <property type="term" value="C:intracellular membrane-bounded organelle"/>
    <property type="evidence" value="ECO:0000318"/>
    <property type="project" value="GO_Central"/>
</dbReference>
<dbReference type="GO" id="GO:0005886">
    <property type="term" value="C:plasma membrane"/>
    <property type="evidence" value="ECO:0007669"/>
    <property type="project" value="UniProtKB-SubCell"/>
</dbReference>
<dbReference type="GO" id="GO:0005503">
    <property type="term" value="F:all-trans retinal binding"/>
    <property type="evidence" value="ECO:0000314"/>
    <property type="project" value="UniProtKB"/>
</dbReference>
<dbReference type="GO" id="GO:1904768">
    <property type="term" value="F:all-trans-retinol binding"/>
    <property type="evidence" value="ECO:0000314"/>
    <property type="project" value="UniProtKB"/>
</dbReference>
<dbReference type="GO" id="GO:0020037">
    <property type="term" value="F:heme binding"/>
    <property type="evidence" value="ECO:0000318"/>
    <property type="project" value="GO_Central"/>
</dbReference>
<dbReference type="GO" id="GO:0005506">
    <property type="term" value="F:iron ion binding"/>
    <property type="evidence" value="ECO:0007669"/>
    <property type="project" value="InterPro"/>
</dbReference>
<dbReference type="GO" id="GO:0004497">
    <property type="term" value="F:monooxygenase activity"/>
    <property type="evidence" value="ECO:0000304"/>
    <property type="project" value="Reactome"/>
</dbReference>
<dbReference type="GO" id="GO:0016712">
    <property type="term" value="F:oxidoreductase activity, acting on paired donors, with incorporation or reduction of molecular oxygen, reduced flavin or flavoprotein as one donor, and incorporation of one atom of oxygen"/>
    <property type="evidence" value="ECO:0000318"/>
    <property type="project" value="GO_Central"/>
</dbReference>
<dbReference type="GO" id="GO:0008401">
    <property type="term" value="F:retinoic acid 4-hydroxylase activity"/>
    <property type="evidence" value="ECO:0000314"/>
    <property type="project" value="UniProtKB"/>
</dbReference>
<dbReference type="GO" id="GO:0001972">
    <property type="term" value="F:retinoic acid binding"/>
    <property type="evidence" value="ECO:0000314"/>
    <property type="project" value="UniProtKB"/>
</dbReference>
<dbReference type="GO" id="GO:0046222">
    <property type="term" value="P:aflatoxin metabolic process"/>
    <property type="evidence" value="ECO:0000314"/>
    <property type="project" value="UniProtKB"/>
</dbReference>
<dbReference type="GO" id="GO:1903604">
    <property type="term" value="P:cytochrome metabolic process"/>
    <property type="evidence" value="ECO:0000304"/>
    <property type="project" value="Reactome"/>
</dbReference>
<dbReference type="GO" id="GO:0006082">
    <property type="term" value="P:organic acid metabolic process"/>
    <property type="evidence" value="ECO:0000318"/>
    <property type="project" value="GO_Central"/>
</dbReference>
<dbReference type="GO" id="GO:0006644">
    <property type="term" value="P:phospholipid metabolic process"/>
    <property type="evidence" value="ECO:0000314"/>
    <property type="project" value="UniProtKB"/>
</dbReference>
<dbReference type="GO" id="GO:0034653">
    <property type="term" value="P:retinoic acid catabolic process"/>
    <property type="evidence" value="ECO:0000314"/>
    <property type="project" value="UniProtKB"/>
</dbReference>
<dbReference type="GO" id="GO:0006805">
    <property type="term" value="P:xenobiotic metabolic process"/>
    <property type="evidence" value="ECO:0000314"/>
    <property type="project" value="UniProtKB"/>
</dbReference>
<dbReference type="CDD" id="cd20671">
    <property type="entry name" value="CYP2W1"/>
    <property type="match status" value="1"/>
</dbReference>
<dbReference type="FunFam" id="1.10.630.10:FF:000010">
    <property type="entry name" value="cytochrome P450 2W1 isoform X2"/>
    <property type="match status" value="1"/>
</dbReference>
<dbReference type="Gene3D" id="1.10.630.10">
    <property type="entry name" value="Cytochrome P450"/>
    <property type="match status" value="1"/>
</dbReference>
<dbReference type="InterPro" id="IPR001128">
    <property type="entry name" value="Cyt_P450"/>
</dbReference>
<dbReference type="InterPro" id="IPR017972">
    <property type="entry name" value="Cyt_P450_CS"/>
</dbReference>
<dbReference type="InterPro" id="IPR002401">
    <property type="entry name" value="Cyt_P450_E_grp-I"/>
</dbReference>
<dbReference type="InterPro" id="IPR036396">
    <property type="entry name" value="Cyt_P450_sf"/>
</dbReference>
<dbReference type="InterPro" id="IPR050182">
    <property type="entry name" value="Cytochrome_P450_fam2"/>
</dbReference>
<dbReference type="PANTHER" id="PTHR24300:SF291">
    <property type="entry name" value="CYTOCHROME P450 2W1"/>
    <property type="match status" value="1"/>
</dbReference>
<dbReference type="PANTHER" id="PTHR24300">
    <property type="entry name" value="CYTOCHROME P450 508A4-RELATED"/>
    <property type="match status" value="1"/>
</dbReference>
<dbReference type="Pfam" id="PF00067">
    <property type="entry name" value="p450"/>
    <property type="match status" value="1"/>
</dbReference>
<dbReference type="PRINTS" id="PR00463">
    <property type="entry name" value="EP450I"/>
</dbReference>
<dbReference type="PRINTS" id="PR00385">
    <property type="entry name" value="P450"/>
</dbReference>
<dbReference type="SUPFAM" id="SSF48264">
    <property type="entry name" value="Cytochrome P450"/>
    <property type="match status" value="1"/>
</dbReference>
<dbReference type="PROSITE" id="PS00086">
    <property type="entry name" value="CYTOCHROME_P450"/>
    <property type="match status" value="1"/>
</dbReference>
<feature type="signal peptide" evidence="2">
    <location>
        <begin position="1"/>
        <end position="22"/>
    </location>
</feature>
<feature type="chain" id="PRO_0000051782" description="Cytochrome P450 2W1" evidence="2">
    <location>
        <begin position="23"/>
        <end position="490"/>
    </location>
</feature>
<feature type="binding site" description="axial binding residue" evidence="1">
    <location>
        <position position="433"/>
    </location>
    <ligand>
        <name>heme</name>
        <dbReference type="ChEBI" id="CHEBI:30413"/>
    </ligand>
    <ligandPart>
        <name>Fe</name>
        <dbReference type="ChEBI" id="CHEBI:18248"/>
    </ligandPart>
</feature>
<feature type="glycosylation site" description="N-linked (GlcNAc...) asparagine" evidence="6">
    <location>
        <position position="177"/>
    </location>
</feature>
<feature type="sequence variant" id="VAR_071912" description="In dbSNP:rs1316523256." evidence="5">
    <original>E</original>
    <variation>A</variation>
    <location>
        <position position="58"/>
    </location>
</feature>
<feature type="sequence variant" id="VAR_027413" description="In dbSNP:rs3735684." evidence="5">
    <original>A</original>
    <variation>T</variation>
    <location>
        <position position="181"/>
    </location>
</feature>
<feature type="sequence variant" id="VAR_071913" description="In dbSNP:rs78873069." evidence="5">
    <original>V</original>
    <variation>I</variation>
    <location>
        <position position="432"/>
    </location>
</feature>
<feature type="sequence variant" id="VAR_071914" description="In dbSNP:rs773499447." evidence="5">
    <original>Q</original>
    <variation>H</variation>
    <location>
        <position position="482"/>
    </location>
</feature>
<feature type="sequence variant" id="VAR_071915" description="In dbSNP:rs3808348." evidence="5">
    <original>P</original>
    <variation>L</variation>
    <location>
        <position position="488"/>
    </location>
</feature>
<feature type="mutagenesis site" description="Loss of glycosylation." evidence="6">
    <original>N</original>
    <variation>A</variation>
    <location>
        <position position="177"/>
    </location>
</feature>
<gene>
    <name evidence="11 15" type="primary">CYP2W1</name>
</gene>
<sequence length="490" mass="53844">MALLLLLFLGLLGLWGLLCACAQDPSPAARWPPGPRPLPLVGNLHLLRLSQQDRSLMELSERYGPVFTVHLGRQKTVVLTGFEAVKEALAGPGQELADRPPIAIFQLIQRGGGIFFSSGARWRAARQFTVRALHSLGVGREPVADKILQELKCLSGQLDGYRGRPFPLALLGWAPSNITFALLFGRRFDYRDPVFVSLLGLIDEVMVLLGSPGLQLFNVYPWLGALLQLHRPVLRKIEEVRAILRTLLEARRPHVCPGDPVCSYVDALIQQGQGDDPEGLFAEANAVACTLDMVMAGTETTSATLQWAALLMGRHPDVQGRVQEELDRVLGPGRTPRLEDQQALPYTSAVLHEVQRFITLLPHVPRCTAADTQLGGFLLPKGTPVIPLLTSVLLDETQWQTPGQFNPGHFLDANGHFVKREAFLPFSAGRRVCVGERLARTELFLLFAGLLQRYRLLPPPGVSPASLDTTPARAFTMRPRAQALCAVPRP</sequence>